<reference key="1">
    <citation type="journal article" date="2009" name="PLoS Genet.">
        <title>Mre11-Rad50 promotes rapid repair of DNA damage in the polyploid archaeon Haloferax volcanii by restraining homologous recombination.</title>
        <authorList>
            <person name="Delmas S."/>
            <person name="Shunburne L."/>
            <person name="Ngo H.P."/>
            <person name="Allers T."/>
        </authorList>
    </citation>
    <scope>NUCLEOTIDE SEQUENCE [GENOMIC DNA]</scope>
    <scope>FUNCTION IN POLYPLOID ORGANISMS</scope>
    <scope>DISRUPTION PHENOTYPE</scope>
    <source>
        <strain>DS2 / DS70</strain>
    </source>
</reference>
<reference key="2">
    <citation type="journal article" date="2010" name="PLoS ONE">
        <title>The complete genome sequence of Haloferax volcanii DS2, a model archaeon.</title>
        <authorList>
            <person name="Hartman A.L."/>
            <person name="Norais C."/>
            <person name="Badger J.H."/>
            <person name="Delmas S."/>
            <person name="Haldenby S."/>
            <person name="Madupu R."/>
            <person name="Robinson J."/>
            <person name="Khouri H."/>
            <person name="Ren Q."/>
            <person name="Lowe T.M."/>
            <person name="Maupin-Furlow J."/>
            <person name="Pohlschroder M."/>
            <person name="Daniels C."/>
            <person name="Pfeiffer F."/>
            <person name="Allers T."/>
            <person name="Eisen J.A."/>
        </authorList>
    </citation>
    <scope>NUCLEOTIDE SEQUENCE [LARGE SCALE GENOMIC DNA]</scope>
    <source>
        <strain>ATCC 29605 / DSM 3757 / JCM 8879 / NBRC 14742 / NCIMB 2012 / VKM B-1768 / DS2</strain>
    </source>
</reference>
<comment type="function">
    <text evidence="1 3">Part of the Rad50/Mre11 complex, which is involved in the early steps of DNA double-strand break (DSB) repair. Mre11 binds to DSB ends and has both double-stranded 3'-5' exonuclease activity and single-stranded endonuclease activity (By similarity). In polyploid organisms, the Rad50/Mre11 complex appears to restrain the repair of double-strand breaks by homologous recombination, allowing another pathway to act as the primary mode of repair (PubMed:19593371).</text>
</comment>
<comment type="cofactor">
    <cofactor evidence="1">
        <name>Mn(2+)</name>
        <dbReference type="ChEBI" id="CHEBI:29035"/>
    </cofactor>
    <text evidence="1">Binds 2 manganese ions per subunit.</text>
</comment>
<comment type="activity regulation">
    <text evidence="1">Nuclease activity is regulated by Rad50.</text>
</comment>
<comment type="subunit">
    <text evidence="1">Homodimer. Forms a heterotetramer composed of two Mre11 subunits and two Rad50 subunits.</text>
</comment>
<comment type="disruption phenotype">
    <text evidence="3">Mutants are more resistant to DNA damage, but recover more slowly than the wild-type.</text>
</comment>
<comment type="similarity">
    <text evidence="1">Belongs to the MRE11/RAD32 family.</text>
</comment>
<feature type="chain" id="PRO_0000410348" description="DNA double-strand break repair protein Mre11">
    <location>
        <begin position="1"/>
        <end position="441"/>
    </location>
</feature>
<feature type="region of interest" description="Disordered" evidence="2">
    <location>
        <begin position="360"/>
        <end position="441"/>
    </location>
</feature>
<feature type="compositionally biased region" description="Acidic residues" evidence="2">
    <location>
        <begin position="379"/>
        <end position="403"/>
    </location>
</feature>
<feature type="compositionally biased region" description="Acidic residues" evidence="2">
    <location>
        <begin position="411"/>
        <end position="425"/>
    </location>
</feature>
<feature type="active site" description="Proton donor" evidence="1">
    <location>
        <position position="86"/>
    </location>
</feature>
<feature type="binding site" evidence="1">
    <location>
        <position position="9"/>
    </location>
    <ligand>
        <name>Mn(2+)</name>
        <dbReference type="ChEBI" id="CHEBI:29035"/>
        <label>1</label>
    </ligand>
</feature>
<feature type="binding site" evidence="1">
    <location>
        <position position="11"/>
    </location>
    <ligand>
        <name>Mn(2+)</name>
        <dbReference type="ChEBI" id="CHEBI:29035"/>
        <label>1</label>
    </ligand>
</feature>
<feature type="binding site" evidence="1">
    <location>
        <position position="50"/>
    </location>
    <ligand>
        <name>Mn(2+)</name>
        <dbReference type="ChEBI" id="CHEBI:29035"/>
        <label>1</label>
    </ligand>
</feature>
<feature type="binding site" evidence="1">
    <location>
        <position position="50"/>
    </location>
    <ligand>
        <name>Mn(2+)</name>
        <dbReference type="ChEBI" id="CHEBI:29035"/>
        <label>2</label>
    </ligand>
</feature>
<feature type="binding site" evidence="1">
    <location>
        <position position="85"/>
    </location>
    <ligand>
        <name>Mn(2+)</name>
        <dbReference type="ChEBI" id="CHEBI:29035"/>
        <label>2</label>
    </ligand>
</feature>
<feature type="binding site" evidence="1">
    <location>
        <position position="150"/>
    </location>
    <ligand>
        <name>Mn(2+)</name>
        <dbReference type="ChEBI" id="CHEBI:29035"/>
        <label>2</label>
    </ligand>
</feature>
<feature type="binding site" evidence="1">
    <location>
        <position position="181"/>
    </location>
    <ligand>
        <name>Mn(2+)</name>
        <dbReference type="ChEBI" id="CHEBI:29035"/>
        <label>2</label>
    </ligand>
</feature>
<feature type="binding site" evidence="1">
    <location>
        <position position="183"/>
    </location>
    <ligand>
        <name>Mn(2+)</name>
        <dbReference type="ChEBI" id="CHEBI:29035"/>
        <label>1</label>
    </ligand>
</feature>
<sequence>MTRVIHTGDTHLGYQQYHSPERRQDFLDAFERVVADALDGDVDAVVHAGDLYHDRRPELPDLLGTLAALRRLDDAGIPFLAIVGNHESTRGGQWLDLFERLGLATRLGRDPHVVGGVAFYGLDHVPRSRRDELDYQFDPVDADRAVLVAHGLFTPFAHADWETETVLAESNVDFDAVLLGDNHVPDTAELDGTWVTYCGSTERASASERDPRGYNLVEFTPDAVDIRRRTLETRPFAFVEVDLAGDEGIERVRQRVREFDLEDAVVIVELRGEGETVTPAAVESFAVEEGALVARVNDKRDIDDDGDLATDVTFADPDDAVRERVREMGLSSAALDVDETVRASKVADSNVRDEVRERVESLLSDDPDAFVAAERESDAEAEESESVEDAADGEDAAAVEDTAETAAEAATDTDTETTADTDSETAADPAASRDSSLGDFA</sequence>
<dbReference type="EC" id="3.1.-.-" evidence="1"/>
<dbReference type="EMBL" id="AJ635369">
    <property type="protein sequence ID" value="CAG25774.1"/>
    <property type="molecule type" value="Genomic_DNA"/>
</dbReference>
<dbReference type="EMBL" id="CP001956">
    <property type="protein sequence ID" value="ADE04038.1"/>
    <property type="molecule type" value="Genomic_DNA"/>
</dbReference>
<dbReference type="RefSeq" id="WP_013035492.1">
    <property type="nucleotide sequence ID" value="NC_013967.1"/>
</dbReference>
<dbReference type="SMR" id="D4GUK0"/>
<dbReference type="IntAct" id="D4GUK0">
    <property type="interactions" value="6"/>
</dbReference>
<dbReference type="STRING" id="309800.HVO_0853"/>
<dbReference type="PaxDb" id="309800-C498_14473"/>
<dbReference type="EnsemblBacteria" id="ADE04038">
    <property type="protein sequence ID" value="ADE04038"/>
    <property type="gene ID" value="HVO_0853"/>
</dbReference>
<dbReference type="GeneID" id="8926365"/>
<dbReference type="KEGG" id="hvo:HVO_0853"/>
<dbReference type="eggNOG" id="arCOG00397">
    <property type="taxonomic scope" value="Archaea"/>
</dbReference>
<dbReference type="HOGENOM" id="CLU_026621_3_0_2"/>
<dbReference type="Proteomes" id="UP000008243">
    <property type="component" value="Chromosome"/>
</dbReference>
<dbReference type="GO" id="GO:0008408">
    <property type="term" value="F:3'-5' exonuclease activity"/>
    <property type="evidence" value="ECO:0007669"/>
    <property type="project" value="UniProtKB-UniRule"/>
</dbReference>
<dbReference type="GO" id="GO:0045027">
    <property type="term" value="F:DNA end binding"/>
    <property type="evidence" value="ECO:0007669"/>
    <property type="project" value="UniProtKB-UniRule"/>
</dbReference>
<dbReference type="GO" id="GO:0004519">
    <property type="term" value="F:endonuclease activity"/>
    <property type="evidence" value="ECO:0007669"/>
    <property type="project" value="UniProtKB-UniRule"/>
</dbReference>
<dbReference type="GO" id="GO:0030145">
    <property type="term" value="F:manganese ion binding"/>
    <property type="evidence" value="ECO:0007669"/>
    <property type="project" value="UniProtKB-UniRule"/>
</dbReference>
<dbReference type="GO" id="GO:0000403">
    <property type="term" value="F:Y-form DNA binding"/>
    <property type="evidence" value="ECO:0007669"/>
    <property type="project" value="UniProtKB-UniRule"/>
</dbReference>
<dbReference type="GO" id="GO:0006302">
    <property type="term" value="P:double-strand break repair"/>
    <property type="evidence" value="ECO:0007669"/>
    <property type="project" value="UniProtKB-UniRule"/>
</dbReference>
<dbReference type="CDD" id="cd00840">
    <property type="entry name" value="MPP_Mre11_N"/>
    <property type="match status" value="1"/>
</dbReference>
<dbReference type="Gene3D" id="3.60.21.10">
    <property type="match status" value="1"/>
</dbReference>
<dbReference type="HAMAP" id="MF_02044">
    <property type="entry name" value="Mre11"/>
    <property type="match status" value="1"/>
</dbReference>
<dbReference type="InterPro" id="IPR004843">
    <property type="entry name" value="Calcineurin-like_PHP_ApaH"/>
</dbReference>
<dbReference type="InterPro" id="IPR050535">
    <property type="entry name" value="DNA_Repair-Maintenance_Comp"/>
</dbReference>
<dbReference type="InterPro" id="IPR029052">
    <property type="entry name" value="Metallo-depent_PP-like"/>
</dbReference>
<dbReference type="InterPro" id="IPR032885">
    <property type="entry name" value="Mre11_archaea-type"/>
</dbReference>
<dbReference type="InterPro" id="IPR054879">
    <property type="entry name" value="Mre11_Halo"/>
</dbReference>
<dbReference type="InterPro" id="IPR041796">
    <property type="entry name" value="Mre11_N"/>
</dbReference>
<dbReference type="NCBIfam" id="NF041030">
    <property type="entry name" value="Mre11_Halo"/>
    <property type="match status" value="1"/>
</dbReference>
<dbReference type="PANTHER" id="PTHR30337">
    <property type="entry name" value="COMPONENT OF ATP-DEPENDENT DSDNA EXONUCLEASE"/>
    <property type="match status" value="1"/>
</dbReference>
<dbReference type="PANTHER" id="PTHR30337:SF0">
    <property type="entry name" value="NUCLEASE SBCCD SUBUNIT D"/>
    <property type="match status" value="1"/>
</dbReference>
<dbReference type="Pfam" id="PF00149">
    <property type="entry name" value="Metallophos"/>
    <property type="match status" value="1"/>
</dbReference>
<dbReference type="SUPFAM" id="SSF56300">
    <property type="entry name" value="Metallo-dependent phosphatases"/>
    <property type="match status" value="1"/>
</dbReference>
<gene>
    <name evidence="1" type="primary">mre11</name>
    <name type="ordered locus">HVO_0853</name>
</gene>
<evidence type="ECO:0000255" key="1">
    <source>
        <dbReference type="HAMAP-Rule" id="MF_02044"/>
    </source>
</evidence>
<evidence type="ECO:0000256" key="2">
    <source>
        <dbReference type="SAM" id="MobiDB-lite"/>
    </source>
</evidence>
<evidence type="ECO:0000269" key="3">
    <source>
    </source>
</evidence>
<accession>D4GUK0</accession>
<accession>P62130</accession>
<organism>
    <name type="scientific">Haloferax volcanii (strain ATCC 29605 / DSM 3757 / JCM 8879 / NBRC 14742 / NCIMB 2012 / VKM B-1768 / DS2)</name>
    <name type="common">Halobacterium volcanii</name>
    <dbReference type="NCBI Taxonomy" id="309800"/>
    <lineage>
        <taxon>Archaea</taxon>
        <taxon>Methanobacteriati</taxon>
        <taxon>Methanobacteriota</taxon>
        <taxon>Stenosarchaea group</taxon>
        <taxon>Halobacteria</taxon>
        <taxon>Halobacteriales</taxon>
        <taxon>Haloferacaceae</taxon>
        <taxon>Haloferax</taxon>
    </lineage>
</organism>
<proteinExistence type="evidence at protein level"/>
<keyword id="KW-0227">DNA damage</keyword>
<keyword id="KW-0234">DNA repair</keyword>
<keyword id="KW-0255">Endonuclease</keyword>
<keyword id="KW-0269">Exonuclease</keyword>
<keyword id="KW-0378">Hydrolase</keyword>
<keyword id="KW-0464">Manganese</keyword>
<keyword id="KW-0479">Metal-binding</keyword>
<keyword id="KW-0540">Nuclease</keyword>
<keyword id="KW-1185">Reference proteome</keyword>
<protein>
    <recommendedName>
        <fullName evidence="1">DNA double-strand break repair protein Mre11</fullName>
        <ecNumber evidence="1">3.1.-.-</ecNumber>
    </recommendedName>
</protein>
<name>MRE11_HALVD</name>